<proteinExistence type="evidence at protein level"/>
<evidence type="ECO:0000269" key="1">
    <source>
    </source>
</evidence>
<evidence type="ECO:0000305" key="2"/>
<reference evidence="2" key="1">
    <citation type="journal article" date="2008" name="Peptides">
        <title>Helokinestatin: a new bradykinin B2 receptor antagonist decapeptide from lizard venom.</title>
        <authorList>
            <person name="Kwok H.F."/>
            <person name="Chen T."/>
            <person name="O'Rourke M."/>
            <person name="Ivanyi C."/>
            <person name="Hirst D."/>
            <person name="Shaw C."/>
        </authorList>
    </citation>
    <scope>PROTEIN SEQUENCE</scope>
    <scope>FUNCTION</scope>
    <scope>SUBCELLULAR LOCATION</scope>
    <scope>TISSUE SPECIFICITY</scope>
    <scope>MASS SPECTROMETRY</scope>
    <source>
        <tissue evidence="1">Venom</tissue>
    </source>
</reference>
<dbReference type="GO" id="GO:0005576">
    <property type="term" value="C:extracellular region"/>
    <property type="evidence" value="ECO:0007669"/>
    <property type="project" value="UniProtKB-SubCell"/>
</dbReference>
<dbReference type="GO" id="GO:0090729">
    <property type="term" value="F:toxin activity"/>
    <property type="evidence" value="ECO:0007669"/>
    <property type="project" value="UniProtKB-KW"/>
</dbReference>
<dbReference type="GO" id="GO:0097746">
    <property type="term" value="P:blood vessel diameter maintenance"/>
    <property type="evidence" value="ECO:0007669"/>
    <property type="project" value="UniProtKB-KW"/>
</dbReference>
<organism>
    <name type="scientific">Heloderma suspectum suspectum</name>
    <name type="common">Reticulate Gila monster</name>
    <dbReference type="NCBI Taxonomy" id="709964"/>
    <lineage>
        <taxon>Eukaryota</taxon>
        <taxon>Metazoa</taxon>
        <taxon>Chordata</taxon>
        <taxon>Craniata</taxon>
        <taxon>Vertebrata</taxon>
        <taxon>Euteleostomi</taxon>
        <taxon>Lepidosauria</taxon>
        <taxon>Squamata</taxon>
        <taxon>Bifurcata</taxon>
        <taxon>Unidentata</taxon>
        <taxon>Episquamata</taxon>
        <taxon>Toxicofera</taxon>
        <taxon>Anguimorpha</taxon>
        <taxon>Neoanguimorpha</taxon>
        <taxon>Helodermatidae</taxon>
        <taxon>Heloderma</taxon>
    </lineage>
</organism>
<protein>
    <recommendedName>
        <fullName>Helokinestatin-1</fullName>
    </recommendedName>
</protein>
<keyword id="KW-1222">Bradykinin receptor impairing toxin</keyword>
<keyword id="KW-0903">Direct protein sequencing</keyword>
<keyword id="KW-1213">G-protein coupled receptor impairing toxin</keyword>
<keyword id="KW-0964">Secreted</keyword>
<keyword id="KW-0800">Toxin</keyword>
<keyword id="KW-0838">Vasoactive</keyword>
<feature type="peptide" id="PRO_0000392452" description="Helokinestatin-1">
    <location>
        <begin position="1"/>
        <end position="10"/>
    </location>
</feature>
<feature type="unsure residue" description="L or I" evidence="1">
    <location>
        <position position="7"/>
    </location>
</feature>
<sequence length="10" mass="1123">GPPYQPLVPR</sequence>
<accession>P86446</accession>
<name>HKS_HELSS</name>
<comment type="function">
    <text evidence="1">Helokinestatin antagonizes the vasodilatory actions of bradykinin at the B2 bradykinin receptor (BDKRB2) in a dose-dependent manner.</text>
</comment>
<comment type="subcellular location">
    <subcellularLocation>
        <location evidence="1">Secreted</location>
    </subcellularLocation>
</comment>
<comment type="tissue specificity">
    <text evidence="1">Expressed by the venom gland.</text>
</comment>
<comment type="mass spectrometry" mass="1122.62" method="MALDI" evidence="1"/>